<feature type="signal peptide" evidence="2">
    <location>
        <begin position="1"/>
        <end position="18"/>
    </location>
</feature>
<feature type="chain" id="PRO_0000394954" description="Probable rhamnogalacturonase C">
    <location>
        <begin position="19"/>
        <end position="459"/>
    </location>
</feature>
<feature type="active site" description="Proton donor" evidence="1">
    <location>
        <position position="216"/>
    </location>
</feature>
<feature type="active site" evidence="1">
    <location>
        <position position="290"/>
    </location>
</feature>
<feature type="glycosylation site" description="N-linked (GlcNAc...) asparagine" evidence="2">
    <location>
        <position position="36"/>
    </location>
</feature>
<feature type="glycosylation site" description="N-linked (GlcNAc...) asparagine" evidence="2">
    <location>
        <position position="64"/>
    </location>
</feature>
<feature type="glycosylation site" description="N-linked (GlcNAc...) asparagine" evidence="2">
    <location>
        <position position="77"/>
    </location>
</feature>
<feature type="glycosylation site" description="N-linked (GlcNAc...) asparagine" evidence="2">
    <location>
        <position position="140"/>
    </location>
</feature>
<feature type="glycosylation site" description="N-linked (GlcNAc...) asparagine" evidence="2">
    <location>
        <position position="155"/>
    </location>
</feature>
<feature type="glycosylation site" description="N-linked (GlcNAc...) asparagine" evidence="2">
    <location>
        <position position="236"/>
    </location>
</feature>
<feature type="glycosylation site" description="N-linked (GlcNAc...) asparagine" evidence="2">
    <location>
        <position position="251"/>
    </location>
</feature>
<feature type="glycosylation site" description="N-linked (GlcNAc...) asparagine" evidence="2">
    <location>
        <position position="315"/>
    </location>
</feature>
<feature type="glycosylation site" description="N-linked (GlcNAc...) asparagine" evidence="2">
    <location>
        <position position="356"/>
    </location>
</feature>
<feature type="disulfide bond" evidence="1">
    <location>
        <begin position="39"/>
        <end position="65"/>
    </location>
</feature>
<feature type="disulfide bond" evidence="1">
    <location>
        <begin position="218"/>
        <end position="235"/>
    </location>
</feature>
<feature type="disulfide bond" evidence="1">
    <location>
        <begin position="337"/>
        <end position="343"/>
    </location>
</feature>
<feature type="disulfide bond" evidence="1">
    <location>
        <begin position="365"/>
        <end position="374"/>
    </location>
</feature>
<evidence type="ECO:0000250" key="1"/>
<evidence type="ECO:0000255" key="2"/>
<evidence type="ECO:0000305" key="3"/>
<protein>
    <recommendedName>
        <fullName>Probable rhamnogalacturonase C</fullName>
        <shortName>RGase C</shortName>
        <shortName>RHG C</shortName>
        <ecNumber>3.2.1.-</ecNumber>
    </recommendedName>
</protein>
<reference key="1">
    <citation type="journal article" date="2006" name="Biochem. J.">
        <title>A new group of exo-acting family 28 glycoside hydrolases of Aspergillus niger that are involved in pectin degradation.</title>
        <authorList>
            <person name="Martens-Uzunova E.S."/>
            <person name="Zandleven J.S."/>
            <person name="Benen J.A."/>
            <person name="Awad H."/>
            <person name="Kools H.J."/>
            <person name="Beldman G."/>
            <person name="Voragen A.G."/>
            <person name="Van den Berg J.A."/>
            <person name="Schaap P.J."/>
        </authorList>
    </citation>
    <scope>NUCLEOTIDE SEQUENCE [GENOMIC DNA]</scope>
</reference>
<reference key="2">
    <citation type="journal article" date="2007" name="Nat. Biotechnol.">
        <title>Genome sequencing and analysis of the versatile cell factory Aspergillus niger CBS 513.88.</title>
        <authorList>
            <person name="Pel H.J."/>
            <person name="de Winde J.H."/>
            <person name="Archer D.B."/>
            <person name="Dyer P.S."/>
            <person name="Hofmann G."/>
            <person name="Schaap P.J."/>
            <person name="Turner G."/>
            <person name="de Vries R.P."/>
            <person name="Albang R."/>
            <person name="Albermann K."/>
            <person name="Andersen M.R."/>
            <person name="Bendtsen J.D."/>
            <person name="Benen J.A.E."/>
            <person name="van den Berg M."/>
            <person name="Breestraat S."/>
            <person name="Caddick M.X."/>
            <person name="Contreras R."/>
            <person name="Cornell M."/>
            <person name="Coutinho P.M."/>
            <person name="Danchin E.G.J."/>
            <person name="Debets A.J.M."/>
            <person name="Dekker P."/>
            <person name="van Dijck P.W.M."/>
            <person name="van Dijk A."/>
            <person name="Dijkhuizen L."/>
            <person name="Driessen A.J.M."/>
            <person name="d'Enfert C."/>
            <person name="Geysens S."/>
            <person name="Goosen C."/>
            <person name="Groot G.S.P."/>
            <person name="de Groot P.W.J."/>
            <person name="Guillemette T."/>
            <person name="Henrissat B."/>
            <person name="Herweijer M."/>
            <person name="van den Hombergh J.P.T.W."/>
            <person name="van den Hondel C.A.M.J.J."/>
            <person name="van der Heijden R.T.J.M."/>
            <person name="van der Kaaij R.M."/>
            <person name="Klis F.M."/>
            <person name="Kools H.J."/>
            <person name="Kubicek C.P."/>
            <person name="van Kuyk P.A."/>
            <person name="Lauber J."/>
            <person name="Lu X."/>
            <person name="van der Maarel M.J.E.C."/>
            <person name="Meulenberg R."/>
            <person name="Menke H."/>
            <person name="Mortimer M.A."/>
            <person name="Nielsen J."/>
            <person name="Oliver S.G."/>
            <person name="Olsthoorn M."/>
            <person name="Pal K."/>
            <person name="van Peij N.N.M.E."/>
            <person name="Ram A.F.J."/>
            <person name="Rinas U."/>
            <person name="Roubos J.A."/>
            <person name="Sagt C.M.J."/>
            <person name="Schmoll M."/>
            <person name="Sun J."/>
            <person name="Ussery D."/>
            <person name="Varga J."/>
            <person name="Vervecken W."/>
            <person name="van de Vondervoort P.J.J."/>
            <person name="Wedler H."/>
            <person name="Woesten H.A.B."/>
            <person name="Zeng A.-P."/>
            <person name="van Ooyen A.J.J."/>
            <person name="Visser J."/>
            <person name="Stam H."/>
        </authorList>
    </citation>
    <scope>NUCLEOTIDE SEQUENCE [LARGE SCALE GENOMIC DNA]</scope>
    <source>
        <strain>ATCC MYA-4892 / CBS 513.88 / FGSC A1513</strain>
    </source>
</reference>
<dbReference type="EC" id="3.2.1.-"/>
<dbReference type="EMBL" id="DQ374429">
    <property type="protein sequence ID" value="ABD61569.1"/>
    <property type="molecule type" value="Genomic_DNA"/>
</dbReference>
<dbReference type="EMBL" id="AM270115">
    <property type="protein sequence ID" value="CAK48050.1"/>
    <property type="molecule type" value="Genomic_DNA"/>
</dbReference>
<dbReference type="RefSeq" id="XP_001391028.1">
    <property type="nucleotide sequence ID" value="XM_001390991.1"/>
</dbReference>
<dbReference type="SMR" id="A2QLQ5"/>
<dbReference type="CAZy" id="GH28">
    <property type="family name" value="Glycoside Hydrolase Family 28"/>
</dbReference>
<dbReference type="GlyCosmos" id="A2QLQ5">
    <property type="glycosylation" value="9 sites, No reported glycans"/>
</dbReference>
<dbReference type="EnsemblFungi" id="CAK48050">
    <property type="protein sequence ID" value="CAK48050"/>
    <property type="gene ID" value="An06g02070"/>
</dbReference>
<dbReference type="GeneID" id="4981206"/>
<dbReference type="KEGG" id="ang:An06g02070"/>
<dbReference type="VEuPathDB" id="FungiDB:An06g02070"/>
<dbReference type="HOGENOM" id="CLU_016031_7_2_1"/>
<dbReference type="Proteomes" id="UP000006706">
    <property type="component" value="Chromosome 8ER"/>
</dbReference>
<dbReference type="GO" id="GO:0005576">
    <property type="term" value="C:extracellular region"/>
    <property type="evidence" value="ECO:0007669"/>
    <property type="project" value="UniProtKB-SubCell"/>
</dbReference>
<dbReference type="GO" id="GO:0004650">
    <property type="term" value="F:polygalacturonase activity"/>
    <property type="evidence" value="ECO:0007669"/>
    <property type="project" value="InterPro"/>
</dbReference>
<dbReference type="GO" id="GO:0046576">
    <property type="term" value="F:rhamnogalacturonan alpha-L-rhamnopyranosyl-(1-&gt;4)-alpha-D-galactopyranosyluronide lyase activity"/>
    <property type="evidence" value="ECO:0007669"/>
    <property type="project" value="UniProtKB-ARBA"/>
</dbReference>
<dbReference type="GO" id="GO:0071555">
    <property type="term" value="P:cell wall organization"/>
    <property type="evidence" value="ECO:0007669"/>
    <property type="project" value="UniProtKB-KW"/>
</dbReference>
<dbReference type="GO" id="GO:0000272">
    <property type="term" value="P:polysaccharide catabolic process"/>
    <property type="evidence" value="ECO:0007669"/>
    <property type="project" value="UniProtKB-KW"/>
</dbReference>
<dbReference type="Gene3D" id="2.160.20.10">
    <property type="entry name" value="Single-stranded right-handed beta-helix, Pectin lyase-like"/>
    <property type="match status" value="1"/>
</dbReference>
<dbReference type="InterPro" id="IPR000743">
    <property type="entry name" value="Glyco_hydro_28"/>
</dbReference>
<dbReference type="InterPro" id="IPR012334">
    <property type="entry name" value="Pectin_lyas_fold"/>
</dbReference>
<dbReference type="InterPro" id="IPR011050">
    <property type="entry name" value="Pectin_lyase_fold/virulence"/>
</dbReference>
<dbReference type="PANTHER" id="PTHR31736">
    <property type="match status" value="1"/>
</dbReference>
<dbReference type="PANTHER" id="PTHR31736:SF19">
    <property type="entry name" value="PECTIN LYASE SUPERFAMILY PROTEIN-RELATED"/>
    <property type="match status" value="1"/>
</dbReference>
<dbReference type="Pfam" id="PF00295">
    <property type="entry name" value="Glyco_hydro_28"/>
    <property type="match status" value="1"/>
</dbReference>
<dbReference type="SUPFAM" id="SSF51126">
    <property type="entry name" value="Pectin lyase-like"/>
    <property type="match status" value="1"/>
</dbReference>
<organism>
    <name type="scientific">Aspergillus niger (strain ATCC MYA-4892 / CBS 513.88 / FGSC A1513)</name>
    <dbReference type="NCBI Taxonomy" id="425011"/>
    <lineage>
        <taxon>Eukaryota</taxon>
        <taxon>Fungi</taxon>
        <taxon>Dikarya</taxon>
        <taxon>Ascomycota</taxon>
        <taxon>Pezizomycotina</taxon>
        <taxon>Eurotiomycetes</taxon>
        <taxon>Eurotiomycetidae</taxon>
        <taxon>Eurotiales</taxon>
        <taxon>Aspergillaceae</taxon>
        <taxon>Aspergillus</taxon>
        <taxon>Aspergillus subgen. Circumdati</taxon>
    </lineage>
</organism>
<sequence>MRASILPLTLFLATLAGAQLSGPVGPLVDYSTKARNQTCNIIDYGAVADGKTDISQALLDAWGNCSVGGLVYIPPGNYSLAEDIELKHGQSSAIQLDGVVMRGHRGSYQMILIRDCNDFEFFSGNSRGAIQGFGYEYLQNDTYGERLLRIQEVNNFSVHGFALIDSPSYYIVFDTVTSGEVYNILIRGVTSVGATDAIDVWGENMWFHDIEVSNGDECVTVKSPAHNYLIENIYCNLSGGTAIGSLGTGTNISDIHYRNLYMNQADACFLKSNNGDGIVKNIIWENVIVHGGPYPLAIDEAWGDDRGSVGVQVSNLTFRNWHGESVSASRPVIRLQCDSDVPCYDITIENVNLWANDSNYVVWQCENAYGDGACLSSAEGTKDLETFTSKQTITATPSYAAPTMAADFTFNLPSTSPFTIPPMPTSFYPGATPISTLLHLHGAGGLPSASPISHHRRHQ</sequence>
<keyword id="KW-0119">Carbohydrate metabolism</keyword>
<keyword id="KW-0961">Cell wall biogenesis/degradation</keyword>
<keyword id="KW-1015">Disulfide bond</keyword>
<keyword id="KW-0325">Glycoprotein</keyword>
<keyword id="KW-0326">Glycosidase</keyword>
<keyword id="KW-0378">Hydrolase</keyword>
<keyword id="KW-0624">Polysaccharide degradation</keyword>
<keyword id="KW-1185">Reference proteome</keyword>
<keyword id="KW-0964">Secreted</keyword>
<keyword id="KW-0732">Signal</keyword>
<gene>
    <name type="primary">rhgC</name>
    <name type="ORF">An06g02070</name>
</gene>
<accession>A2QLQ5</accession>
<accession>Q27UA6</accession>
<comment type="function">
    <text evidence="1">Pectinolytic enzymes consist of four classes of enzymes: pectine lyase, polygalacturonase, pectin methylesterase and rhamnogalacturonase. Hydrolyzes alpha-D-galacturonopyranosyl-(1,2)-alpha-L-rhamnopyranosyl linkages in the backbone of the hairy regions of pectins (By similarity).</text>
</comment>
<comment type="subcellular location">
    <subcellularLocation>
        <location evidence="1">Secreted</location>
    </subcellularLocation>
</comment>
<comment type="similarity">
    <text evidence="3">Belongs to the glycosyl hydrolase 28 family.</text>
</comment>
<name>RHGC_ASPNC</name>
<proteinExistence type="inferred from homology"/>